<proteinExistence type="inferred from homology"/>
<protein>
    <recommendedName>
        <fullName evidence="1">Flagellar L-ring protein</fullName>
    </recommendedName>
    <alternativeName>
        <fullName evidence="1">Basal body L-ring protein</fullName>
    </alternativeName>
</protein>
<comment type="function">
    <text evidence="1">Assembles around the rod to form the L-ring and probably protects the motor/basal body from shearing forces during rotation.</text>
</comment>
<comment type="subunit">
    <text evidence="1">The basal body constitutes a major portion of the flagellar organelle and consists of four rings (L,P,S, and M) mounted on a central rod.</text>
</comment>
<comment type="subcellular location">
    <subcellularLocation>
        <location evidence="1">Cell outer membrane</location>
        <topology evidence="1">Lipid-anchor</topology>
    </subcellularLocation>
    <subcellularLocation>
        <location evidence="1">Bacterial flagellum basal body</location>
    </subcellularLocation>
</comment>
<comment type="similarity">
    <text evidence="1">Belongs to the FlgH family.</text>
</comment>
<evidence type="ECO:0000255" key="1">
    <source>
        <dbReference type="HAMAP-Rule" id="MF_00415"/>
    </source>
</evidence>
<reference key="1">
    <citation type="submission" date="2008-04" db="EMBL/GenBank/DDBJ databases">
        <title>Complete sequence of chromosome 1 of Burkholderia ambifaria MC40-6.</title>
        <authorList>
            <person name="Copeland A."/>
            <person name="Lucas S."/>
            <person name="Lapidus A."/>
            <person name="Glavina del Rio T."/>
            <person name="Dalin E."/>
            <person name="Tice H."/>
            <person name="Pitluck S."/>
            <person name="Chain P."/>
            <person name="Malfatti S."/>
            <person name="Shin M."/>
            <person name="Vergez L."/>
            <person name="Lang D."/>
            <person name="Schmutz J."/>
            <person name="Larimer F."/>
            <person name="Land M."/>
            <person name="Hauser L."/>
            <person name="Kyrpides N."/>
            <person name="Lykidis A."/>
            <person name="Ramette A."/>
            <person name="Konstantinidis K."/>
            <person name="Tiedje J."/>
            <person name="Richardson P."/>
        </authorList>
    </citation>
    <scope>NUCLEOTIDE SEQUENCE [LARGE SCALE GENOMIC DNA]</scope>
    <source>
        <strain>MC40-6</strain>
    </source>
</reference>
<keyword id="KW-0975">Bacterial flagellum</keyword>
<keyword id="KW-0998">Cell outer membrane</keyword>
<keyword id="KW-0449">Lipoprotein</keyword>
<keyword id="KW-0472">Membrane</keyword>
<keyword id="KW-0564">Palmitate</keyword>
<keyword id="KW-0732">Signal</keyword>
<feature type="signal peptide" evidence="1">
    <location>
        <begin position="1"/>
        <end position="25"/>
    </location>
</feature>
<feature type="chain" id="PRO_1000123940" description="Flagellar L-ring protein">
    <location>
        <begin position="26"/>
        <end position="229"/>
    </location>
</feature>
<feature type="lipid moiety-binding region" description="N-palmitoyl cysteine" evidence="1">
    <location>
        <position position="26"/>
    </location>
</feature>
<feature type="lipid moiety-binding region" description="S-diacylglycerol cysteine" evidence="1">
    <location>
        <position position="26"/>
    </location>
</feature>
<organism>
    <name type="scientific">Burkholderia ambifaria (strain MC40-6)</name>
    <dbReference type="NCBI Taxonomy" id="398577"/>
    <lineage>
        <taxon>Bacteria</taxon>
        <taxon>Pseudomonadati</taxon>
        <taxon>Pseudomonadota</taxon>
        <taxon>Betaproteobacteria</taxon>
        <taxon>Burkholderiales</taxon>
        <taxon>Burkholderiaceae</taxon>
        <taxon>Burkholderia</taxon>
        <taxon>Burkholderia cepacia complex</taxon>
    </lineage>
</organism>
<dbReference type="EMBL" id="CP001025">
    <property type="protein sequence ID" value="ACB65405.1"/>
    <property type="molecule type" value="Genomic_DNA"/>
</dbReference>
<dbReference type="RefSeq" id="WP_012364902.1">
    <property type="nucleotide sequence ID" value="NC_010551.1"/>
</dbReference>
<dbReference type="SMR" id="B1YPA0"/>
<dbReference type="KEGG" id="bac:BamMC406_2929"/>
<dbReference type="HOGENOM" id="CLU_069313_0_0_4"/>
<dbReference type="OrthoDB" id="9789463at2"/>
<dbReference type="Proteomes" id="UP000001680">
    <property type="component" value="Chromosome 1"/>
</dbReference>
<dbReference type="GO" id="GO:0009427">
    <property type="term" value="C:bacterial-type flagellum basal body, distal rod, L ring"/>
    <property type="evidence" value="ECO:0007669"/>
    <property type="project" value="InterPro"/>
</dbReference>
<dbReference type="GO" id="GO:0009279">
    <property type="term" value="C:cell outer membrane"/>
    <property type="evidence" value="ECO:0007669"/>
    <property type="project" value="UniProtKB-SubCell"/>
</dbReference>
<dbReference type="GO" id="GO:0003774">
    <property type="term" value="F:cytoskeletal motor activity"/>
    <property type="evidence" value="ECO:0007669"/>
    <property type="project" value="InterPro"/>
</dbReference>
<dbReference type="GO" id="GO:0071973">
    <property type="term" value="P:bacterial-type flagellum-dependent cell motility"/>
    <property type="evidence" value="ECO:0007669"/>
    <property type="project" value="InterPro"/>
</dbReference>
<dbReference type="HAMAP" id="MF_00415">
    <property type="entry name" value="FlgH"/>
    <property type="match status" value="1"/>
</dbReference>
<dbReference type="InterPro" id="IPR000527">
    <property type="entry name" value="Flag_Lring"/>
</dbReference>
<dbReference type="NCBIfam" id="NF009337">
    <property type="entry name" value="PRK12697.1"/>
    <property type="match status" value="1"/>
</dbReference>
<dbReference type="PANTHER" id="PTHR34933">
    <property type="entry name" value="FLAGELLAR L-RING PROTEIN"/>
    <property type="match status" value="1"/>
</dbReference>
<dbReference type="PANTHER" id="PTHR34933:SF3">
    <property type="entry name" value="FLAGELLAR L-RING PROTEIN"/>
    <property type="match status" value="1"/>
</dbReference>
<dbReference type="Pfam" id="PF02107">
    <property type="entry name" value="FlgH"/>
    <property type="match status" value="1"/>
</dbReference>
<dbReference type="PRINTS" id="PR01008">
    <property type="entry name" value="FLGLRINGFLGH"/>
</dbReference>
<dbReference type="PROSITE" id="PS51257">
    <property type="entry name" value="PROKAR_LIPOPROTEIN"/>
    <property type="match status" value="1"/>
</dbReference>
<name>FLGH_BURA4</name>
<sequence length="229" mass="24130">MKQVRLLPSAPVRAVCALAVAALAGCAQIPRDPIIQQPMTAQPPMPMSMQAPGSIYNPGYAGRPLFEDQRPRNVGDILTIMIAENINATKSSGANTNRQGNTDFSVPTAGFLGGLFAKANMSAAGANKFAATGGASAANTFNGTITVTVTNVLPNGNLVVSGEKQMLINQGNEFVRFSGVVNPNTISGANSVYSTQVADAKIEYSSKGYINEAETMGWLQRFFLNLAPW</sequence>
<gene>
    <name evidence="1" type="primary">flgH</name>
    <name type="ordered locus">BamMC406_2929</name>
</gene>
<accession>B1YPA0</accession>